<name>LEPA_ACIBS</name>
<reference key="1">
    <citation type="journal article" date="2008" name="PLoS ONE">
        <title>Comparative analysis of Acinetobacters: three genomes for three lifestyles.</title>
        <authorList>
            <person name="Vallenet D."/>
            <person name="Nordmann P."/>
            <person name="Barbe V."/>
            <person name="Poirel L."/>
            <person name="Mangenot S."/>
            <person name="Bataille E."/>
            <person name="Dossat C."/>
            <person name="Gas S."/>
            <person name="Kreimeyer A."/>
            <person name="Lenoble P."/>
            <person name="Oztas S."/>
            <person name="Poulain J."/>
            <person name="Segurens B."/>
            <person name="Robert C."/>
            <person name="Abergel C."/>
            <person name="Claverie J.-M."/>
            <person name="Raoult D."/>
            <person name="Medigue C."/>
            <person name="Weissenbach J."/>
            <person name="Cruveiller S."/>
        </authorList>
    </citation>
    <scope>NUCLEOTIDE SEQUENCE [LARGE SCALE GENOMIC DNA]</scope>
    <source>
        <strain>SDF</strain>
    </source>
</reference>
<feature type="chain" id="PRO_1000092364" description="Elongation factor 4">
    <location>
        <begin position="1"/>
        <end position="605"/>
    </location>
</feature>
<feature type="domain" description="tr-type G">
    <location>
        <begin position="11"/>
        <end position="193"/>
    </location>
</feature>
<feature type="binding site" evidence="1">
    <location>
        <begin position="23"/>
        <end position="28"/>
    </location>
    <ligand>
        <name>GTP</name>
        <dbReference type="ChEBI" id="CHEBI:37565"/>
    </ligand>
</feature>
<feature type="binding site" evidence="1">
    <location>
        <begin position="140"/>
        <end position="143"/>
    </location>
    <ligand>
        <name>GTP</name>
        <dbReference type="ChEBI" id="CHEBI:37565"/>
    </ligand>
</feature>
<keyword id="KW-0997">Cell inner membrane</keyword>
<keyword id="KW-1003">Cell membrane</keyword>
<keyword id="KW-0342">GTP-binding</keyword>
<keyword id="KW-0378">Hydrolase</keyword>
<keyword id="KW-0472">Membrane</keyword>
<keyword id="KW-0547">Nucleotide-binding</keyword>
<keyword id="KW-0648">Protein biosynthesis</keyword>
<evidence type="ECO:0000255" key="1">
    <source>
        <dbReference type="HAMAP-Rule" id="MF_00071"/>
    </source>
</evidence>
<dbReference type="EC" id="3.6.5.n1" evidence="1"/>
<dbReference type="EMBL" id="CU468230">
    <property type="protein sequence ID" value="CAP00309.1"/>
    <property type="molecule type" value="Genomic_DNA"/>
</dbReference>
<dbReference type="SMR" id="B0VTM2"/>
<dbReference type="KEGG" id="abm:ABSDF0949"/>
<dbReference type="HOGENOM" id="CLU_009995_3_3_6"/>
<dbReference type="Proteomes" id="UP000001741">
    <property type="component" value="Chromosome"/>
</dbReference>
<dbReference type="GO" id="GO:0005886">
    <property type="term" value="C:plasma membrane"/>
    <property type="evidence" value="ECO:0007669"/>
    <property type="project" value="UniProtKB-SubCell"/>
</dbReference>
<dbReference type="GO" id="GO:0005525">
    <property type="term" value="F:GTP binding"/>
    <property type="evidence" value="ECO:0007669"/>
    <property type="project" value="UniProtKB-UniRule"/>
</dbReference>
<dbReference type="GO" id="GO:0003924">
    <property type="term" value="F:GTPase activity"/>
    <property type="evidence" value="ECO:0007669"/>
    <property type="project" value="UniProtKB-UniRule"/>
</dbReference>
<dbReference type="GO" id="GO:0097216">
    <property type="term" value="F:guanosine tetraphosphate binding"/>
    <property type="evidence" value="ECO:0007669"/>
    <property type="project" value="UniProtKB-ARBA"/>
</dbReference>
<dbReference type="GO" id="GO:0043022">
    <property type="term" value="F:ribosome binding"/>
    <property type="evidence" value="ECO:0007669"/>
    <property type="project" value="UniProtKB-UniRule"/>
</dbReference>
<dbReference type="GO" id="GO:0003746">
    <property type="term" value="F:translation elongation factor activity"/>
    <property type="evidence" value="ECO:0007669"/>
    <property type="project" value="UniProtKB-UniRule"/>
</dbReference>
<dbReference type="GO" id="GO:0045727">
    <property type="term" value="P:positive regulation of translation"/>
    <property type="evidence" value="ECO:0007669"/>
    <property type="project" value="UniProtKB-UniRule"/>
</dbReference>
<dbReference type="CDD" id="cd03699">
    <property type="entry name" value="EF4_II"/>
    <property type="match status" value="1"/>
</dbReference>
<dbReference type="CDD" id="cd16260">
    <property type="entry name" value="EF4_III"/>
    <property type="match status" value="1"/>
</dbReference>
<dbReference type="CDD" id="cd01890">
    <property type="entry name" value="LepA"/>
    <property type="match status" value="1"/>
</dbReference>
<dbReference type="CDD" id="cd03709">
    <property type="entry name" value="lepA_C"/>
    <property type="match status" value="1"/>
</dbReference>
<dbReference type="FunFam" id="3.40.50.300:FF:000078">
    <property type="entry name" value="Elongation factor 4"/>
    <property type="match status" value="1"/>
</dbReference>
<dbReference type="FunFam" id="2.40.30.10:FF:000015">
    <property type="entry name" value="Translation factor GUF1, mitochondrial"/>
    <property type="match status" value="1"/>
</dbReference>
<dbReference type="FunFam" id="3.30.70.240:FF:000007">
    <property type="entry name" value="Translation factor GUF1, mitochondrial"/>
    <property type="match status" value="1"/>
</dbReference>
<dbReference type="FunFam" id="3.30.70.2570:FF:000001">
    <property type="entry name" value="Translation factor GUF1, mitochondrial"/>
    <property type="match status" value="1"/>
</dbReference>
<dbReference type="FunFam" id="3.30.70.870:FF:000004">
    <property type="entry name" value="Translation factor GUF1, mitochondrial"/>
    <property type="match status" value="1"/>
</dbReference>
<dbReference type="Gene3D" id="3.30.70.240">
    <property type="match status" value="1"/>
</dbReference>
<dbReference type="Gene3D" id="3.30.70.2570">
    <property type="entry name" value="Elongation factor 4, C-terminal domain"/>
    <property type="match status" value="1"/>
</dbReference>
<dbReference type="Gene3D" id="3.30.70.870">
    <property type="entry name" value="Elongation Factor G (Translational Gtpase), domain 3"/>
    <property type="match status" value="1"/>
</dbReference>
<dbReference type="Gene3D" id="3.40.50.300">
    <property type="entry name" value="P-loop containing nucleotide triphosphate hydrolases"/>
    <property type="match status" value="1"/>
</dbReference>
<dbReference type="Gene3D" id="2.40.30.10">
    <property type="entry name" value="Translation factors"/>
    <property type="match status" value="1"/>
</dbReference>
<dbReference type="HAMAP" id="MF_00071">
    <property type="entry name" value="LepA"/>
    <property type="match status" value="1"/>
</dbReference>
<dbReference type="InterPro" id="IPR006297">
    <property type="entry name" value="EF-4"/>
</dbReference>
<dbReference type="InterPro" id="IPR035647">
    <property type="entry name" value="EFG_III/V"/>
</dbReference>
<dbReference type="InterPro" id="IPR000640">
    <property type="entry name" value="EFG_V-like"/>
</dbReference>
<dbReference type="InterPro" id="IPR004161">
    <property type="entry name" value="EFTu-like_2"/>
</dbReference>
<dbReference type="InterPro" id="IPR031157">
    <property type="entry name" value="G_TR_CS"/>
</dbReference>
<dbReference type="InterPro" id="IPR038363">
    <property type="entry name" value="LepA_C_sf"/>
</dbReference>
<dbReference type="InterPro" id="IPR013842">
    <property type="entry name" value="LepA_CTD"/>
</dbReference>
<dbReference type="InterPro" id="IPR035654">
    <property type="entry name" value="LepA_IV"/>
</dbReference>
<dbReference type="InterPro" id="IPR027417">
    <property type="entry name" value="P-loop_NTPase"/>
</dbReference>
<dbReference type="InterPro" id="IPR005225">
    <property type="entry name" value="Small_GTP-bd"/>
</dbReference>
<dbReference type="InterPro" id="IPR000795">
    <property type="entry name" value="T_Tr_GTP-bd_dom"/>
</dbReference>
<dbReference type="NCBIfam" id="TIGR01393">
    <property type="entry name" value="lepA"/>
    <property type="match status" value="1"/>
</dbReference>
<dbReference type="NCBIfam" id="TIGR00231">
    <property type="entry name" value="small_GTP"/>
    <property type="match status" value="1"/>
</dbReference>
<dbReference type="PANTHER" id="PTHR43512:SF4">
    <property type="entry name" value="TRANSLATION FACTOR GUF1 HOMOLOG, CHLOROPLASTIC"/>
    <property type="match status" value="1"/>
</dbReference>
<dbReference type="PANTHER" id="PTHR43512">
    <property type="entry name" value="TRANSLATION FACTOR GUF1-RELATED"/>
    <property type="match status" value="1"/>
</dbReference>
<dbReference type="Pfam" id="PF00679">
    <property type="entry name" value="EFG_C"/>
    <property type="match status" value="1"/>
</dbReference>
<dbReference type="Pfam" id="PF00009">
    <property type="entry name" value="GTP_EFTU"/>
    <property type="match status" value="1"/>
</dbReference>
<dbReference type="Pfam" id="PF03144">
    <property type="entry name" value="GTP_EFTU_D2"/>
    <property type="match status" value="1"/>
</dbReference>
<dbReference type="Pfam" id="PF06421">
    <property type="entry name" value="LepA_C"/>
    <property type="match status" value="1"/>
</dbReference>
<dbReference type="PRINTS" id="PR00315">
    <property type="entry name" value="ELONGATNFCT"/>
</dbReference>
<dbReference type="SMART" id="SM00838">
    <property type="entry name" value="EFG_C"/>
    <property type="match status" value="1"/>
</dbReference>
<dbReference type="SUPFAM" id="SSF54980">
    <property type="entry name" value="EF-G C-terminal domain-like"/>
    <property type="match status" value="2"/>
</dbReference>
<dbReference type="SUPFAM" id="SSF52540">
    <property type="entry name" value="P-loop containing nucleoside triphosphate hydrolases"/>
    <property type="match status" value="1"/>
</dbReference>
<dbReference type="PROSITE" id="PS00301">
    <property type="entry name" value="G_TR_1"/>
    <property type="match status" value="1"/>
</dbReference>
<dbReference type="PROSITE" id="PS51722">
    <property type="entry name" value="G_TR_2"/>
    <property type="match status" value="1"/>
</dbReference>
<proteinExistence type="inferred from homology"/>
<organism>
    <name type="scientific">Acinetobacter baumannii (strain SDF)</name>
    <dbReference type="NCBI Taxonomy" id="509170"/>
    <lineage>
        <taxon>Bacteria</taxon>
        <taxon>Pseudomonadati</taxon>
        <taxon>Pseudomonadota</taxon>
        <taxon>Gammaproteobacteria</taxon>
        <taxon>Moraxellales</taxon>
        <taxon>Moraxellaceae</taxon>
        <taxon>Acinetobacter</taxon>
        <taxon>Acinetobacter calcoaceticus/baumannii complex</taxon>
    </lineage>
</organism>
<accession>B0VTM2</accession>
<protein>
    <recommendedName>
        <fullName evidence="1">Elongation factor 4</fullName>
        <shortName evidence="1">EF-4</shortName>
        <ecNumber evidence="1">3.6.5.n1</ecNumber>
    </recommendedName>
    <alternativeName>
        <fullName evidence="1">Ribosomal back-translocase LepA</fullName>
    </alternativeName>
</protein>
<sequence>MAQAKKSVDIKNIRNFSIIAHIDHGKSTLADRFIQMCGGLQDREMQAQVLDSMELERERGITIKAASVTLYYTHPNGQEYQLNFIDTPGHVDFSYEVSRSLAACEGALLVVDAAQGVEAQSVANCYTAIEQGLEVLPILNKIDLPQAEPERVIHEIEEIIGIEATNAPTCSAKTGLGVEGVLETLVDVIPAPTGDREAPLQALIIDSWFDNYLGVVSLVRIKDGRIRKGDKMLVKSTGQTHIVTSVGVFNPKHTETGVLEAGEVGFVIAGIKDIFGAPVGDTITLSTTPEVASLPGFKKVKPQVYAGLFPIDASDFEPFREALQKLQINDSALFFEPESSDALGFGFRCGFLGMLHMEIVQERLEREYDLDLISSAPTVVYEAVTKKGDTIYIDSPSKMPDGSVVEDLREPIAECHILVPQEYLGNVMILCIERRGVQKDMKFLGNQVSITFEIPMAEVVMDFFDKLKSCSRGFASLDYNFIRFESSSLVKVDVLINGEKVDALAMICHRNDARHRGIALVDKMKDLIPRQMFDVAIQAAIGAQIIARSTVKAMRKNVLAKCYGGDVSRKKKLLAKQKEGKKRMKQVGSVEIPQEAFLAVLKVER</sequence>
<comment type="function">
    <text evidence="1">Required for accurate and efficient protein synthesis under certain stress conditions. May act as a fidelity factor of the translation reaction, by catalyzing a one-codon backward translocation of tRNAs on improperly translocated ribosomes. Back-translocation proceeds from a post-translocation (POST) complex to a pre-translocation (PRE) complex, thus giving elongation factor G a second chance to translocate the tRNAs correctly. Binds to ribosomes in a GTP-dependent manner.</text>
</comment>
<comment type="catalytic activity">
    <reaction evidence="1">
        <text>GTP + H2O = GDP + phosphate + H(+)</text>
        <dbReference type="Rhea" id="RHEA:19669"/>
        <dbReference type="ChEBI" id="CHEBI:15377"/>
        <dbReference type="ChEBI" id="CHEBI:15378"/>
        <dbReference type="ChEBI" id="CHEBI:37565"/>
        <dbReference type="ChEBI" id="CHEBI:43474"/>
        <dbReference type="ChEBI" id="CHEBI:58189"/>
        <dbReference type="EC" id="3.6.5.n1"/>
    </reaction>
</comment>
<comment type="subcellular location">
    <subcellularLocation>
        <location evidence="1">Cell inner membrane</location>
        <topology evidence="1">Peripheral membrane protein</topology>
        <orientation evidence="1">Cytoplasmic side</orientation>
    </subcellularLocation>
</comment>
<comment type="similarity">
    <text evidence="1">Belongs to the TRAFAC class translation factor GTPase superfamily. Classic translation factor GTPase family. LepA subfamily.</text>
</comment>
<gene>
    <name evidence="1" type="primary">lepA</name>
    <name type="ordered locus">ABSDF0949</name>
</gene>